<comment type="function">
    <text evidence="1">General (non sugar-specific) component of the phosphoenolpyruvate-dependent sugar phosphotransferase system (sugar PTS). This major carbohydrate active-transport system catalyzes the phosphorylation of incoming sugar substrates concomitantly with their translocation across the cell membrane. Enzyme I transfers the phosphoryl group from phosphoenolpyruvate (PEP) to the phosphoryl carrier protein (HPr).</text>
</comment>
<comment type="catalytic activity">
    <reaction evidence="1">
        <text>L-histidyl-[protein] + phosphoenolpyruvate = N(pros)-phospho-L-histidyl-[protein] + pyruvate</text>
        <dbReference type="Rhea" id="RHEA:23880"/>
        <dbReference type="Rhea" id="RHEA-COMP:9745"/>
        <dbReference type="Rhea" id="RHEA-COMP:9746"/>
        <dbReference type="ChEBI" id="CHEBI:15361"/>
        <dbReference type="ChEBI" id="CHEBI:29979"/>
        <dbReference type="ChEBI" id="CHEBI:58702"/>
        <dbReference type="ChEBI" id="CHEBI:64837"/>
        <dbReference type="EC" id="2.7.3.9"/>
    </reaction>
</comment>
<comment type="cofactor">
    <cofactor evidence="1">
        <name>Mg(2+)</name>
        <dbReference type="ChEBI" id="CHEBI:18420"/>
    </cofactor>
</comment>
<comment type="subunit">
    <text evidence="1">Homodimer.</text>
</comment>
<comment type="subcellular location">
    <subcellularLocation>
        <location evidence="3">Cytoplasm</location>
    </subcellularLocation>
</comment>
<comment type="domain">
    <text evidence="1">The N-terminal domain contains the HPr binding site, the central domain the pyrophosphate/phosphate carrier histidine, and the C-terminal domain the pyruvate binding site.</text>
</comment>
<comment type="miscellaneous">
    <text evidence="1">The reaction takes place in three steps, mediated by a phosphocarrier histidine residue located on the surface of the central domain. The two first partial reactions are catalyzed at an active site located on the N-terminal domain, and the third partial reaction is catalyzed at an active site located on the C-terminal domain. For catalytic turnover, the central domain swivels from the concave surface of the N-terminal domain to that of the C-terminal domain.</text>
</comment>
<comment type="similarity">
    <text evidence="3">Belongs to the PEP-utilizing enzyme family.</text>
</comment>
<dbReference type="EC" id="2.7.3.9" evidence="1"/>
<dbReference type="EMBL" id="L43967">
    <property type="protein sequence ID" value="AAC72450.1"/>
    <property type="molecule type" value="Genomic_DNA"/>
</dbReference>
<dbReference type="PIR" id="D64247">
    <property type="entry name" value="D64247"/>
</dbReference>
<dbReference type="RefSeq" id="WP_010869480.1">
    <property type="nucleotide sequence ID" value="NC_000908.2"/>
</dbReference>
<dbReference type="SMR" id="P47668"/>
<dbReference type="FunCoup" id="P47668">
    <property type="interactions" value="147"/>
</dbReference>
<dbReference type="STRING" id="243273.MG_429"/>
<dbReference type="GeneID" id="88282610"/>
<dbReference type="KEGG" id="mge:MG_429"/>
<dbReference type="eggNOG" id="COG1080">
    <property type="taxonomic scope" value="Bacteria"/>
</dbReference>
<dbReference type="HOGENOM" id="CLU_007308_7_0_14"/>
<dbReference type="InParanoid" id="P47668"/>
<dbReference type="OrthoDB" id="9765468at2"/>
<dbReference type="BioCyc" id="MGEN243273:G1GJ2-523-MONOMER"/>
<dbReference type="Proteomes" id="UP000000807">
    <property type="component" value="Chromosome"/>
</dbReference>
<dbReference type="GO" id="GO:0005737">
    <property type="term" value="C:cytoplasm"/>
    <property type="evidence" value="ECO:0007669"/>
    <property type="project" value="UniProtKB-SubCell"/>
</dbReference>
<dbReference type="GO" id="GO:0016301">
    <property type="term" value="F:kinase activity"/>
    <property type="evidence" value="ECO:0007669"/>
    <property type="project" value="UniProtKB-KW"/>
</dbReference>
<dbReference type="GO" id="GO:0046872">
    <property type="term" value="F:metal ion binding"/>
    <property type="evidence" value="ECO:0007669"/>
    <property type="project" value="UniProtKB-KW"/>
</dbReference>
<dbReference type="GO" id="GO:0008965">
    <property type="term" value="F:phosphoenolpyruvate-protein phosphotransferase activity"/>
    <property type="evidence" value="ECO:0000318"/>
    <property type="project" value="GO_Central"/>
</dbReference>
<dbReference type="GO" id="GO:0015764">
    <property type="term" value="P:N-acetylglucosamine transport"/>
    <property type="evidence" value="ECO:0000318"/>
    <property type="project" value="GO_Central"/>
</dbReference>
<dbReference type="GO" id="GO:0009401">
    <property type="term" value="P:phosphoenolpyruvate-dependent sugar phosphotransferase system"/>
    <property type="evidence" value="ECO:0007669"/>
    <property type="project" value="UniProtKB-KW"/>
</dbReference>
<dbReference type="Gene3D" id="3.20.20.60">
    <property type="entry name" value="Phosphoenolpyruvate-binding domains"/>
    <property type="match status" value="1"/>
</dbReference>
<dbReference type="Gene3D" id="3.50.30.10">
    <property type="entry name" value="Phosphohistidine domain"/>
    <property type="match status" value="1"/>
</dbReference>
<dbReference type="Gene3D" id="1.10.274.10">
    <property type="entry name" value="PtsI, HPr-binding domain"/>
    <property type="match status" value="1"/>
</dbReference>
<dbReference type="InterPro" id="IPR008279">
    <property type="entry name" value="PEP-util_enz_mobile_dom"/>
</dbReference>
<dbReference type="InterPro" id="IPR050499">
    <property type="entry name" value="PEP-utilizing_PTS_enzyme"/>
</dbReference>
<dbReference type="InterPro" id="IPR018274">
    <property type="entry name" value="PEP_util_AS"/>
</dbReference>
<dbReference type="InterPro" id="IPR000121">
    <property type="entry name" value="PEP_util_C"/>
</dbReference>
<dbReference type="InterPro" id="IPR023151">
    <property type="entry name" value="PEP_util_CS"/>
</dbReference>
<dbReference type="InterPro" id="IPR036637">
    <property type="entry name" value="Phosphohistidine_dom_sf"/>
</dbReference>
<dbReference type="InterPro" id="IPR024692">
    <property type="entry name" value="PTS_EI"/>
</dbReference>
<dbReference type="InterPro" id="IPR006318">
    <property type="entry name" value="PTS_EI-like"/>
</dbReference>
<dbReference type="InterPro" id="IPR008731">
    <property type="entry name" value="PTS_EIN"/>
</dbReference>
<dbReference type="InterPro" id="IPR036618">
    <property type="entry name" value="PtsI_HPr-bd_sf"/>
</dbReference>
<dbReference type="InterPro" id="IPR015813">
    <property type="entry name" value="Pyrv/PenolPyrv_kinase-like_dom"/>
</dbReference>
<dbReference type="InterPro" id="IPR040442">
    <property type="entry name" value="Pyrv_kinase-like_dom_sf"/>
</dbReference>
<dbReference type="NCBIfam" id="TIGR01417">
    <property type="entry name" value="PTS_I_fam"/>
    <property type="match status" value="1"/>
</dbReference>
<dbReference type="PANTHER" id="PTHR46244">
    <property type="entry name" value="PHOSPHOENOLPYRUVATE-PROTEIN PHOSPHOTRANSFERASE"/>
    <property type="match status" value="1"/>
</dbReference>
<dbReference type="PANTHER" id="PTHR46244:SF3">
    <property type="entry name" value="PHOSPHOENOLPYRUVATE-PROTEIN PHOSPHOTRANSFERASE"/>
    <property type="match status" value="1"/>
</dbReference>
<dbReference type="Pfam" id="PF05524">
    <property type="entry name" value="PEP-utilisers_N"/>
    <property type="match status" value="1"/>
</dbReference>
<dbReference type="Pfam" id="PF00391">
    <property type="entry name" value="PEP-utilizers"/>
    <property type="match status" value="1"/>
</dbReference>
<dbReference type="Pfam" id="PF02896">
    <property type="entry name" value="PEP-utilizers_C"/>
    <property type="match status" value="1"/>
</dbReference>
<dbReference type="PIRSF" id="PIRSF000732">
    <property type="entry name" value="PTS_enzyme_I"/>
    <property type="match status" value="1"/>
</dbReference>
<dbReference type="PRINTS" id="PR01736">
    <property type="entry name" value="PHPHTRNFRASE"/>
</dbReference>
<dbReference type="SUPFAM" id="SSF47831">
    <property type="entry name" value="Enzyme I of the PEP:sugar phosphotransferase system HPr-binding (sub)domain"/>
    <property type="match status" value="1"/>
</dbReference>
<dbReference type="SUPFAM" id="SSF51621">
    <property type="entry name" value="Phosphoenolpyruvate/pyruvate domain"/>
    <property type="match status" value="1"/>
</dbReference>
<dbReference type="SUPFAM" id="SSF52009">
    <property type="entry name" value="Phosphohistidine domain"/>
    <property type="match status" value="1"/>
</dbReference>
<dbReference type="PROSITE" id="PS00742">
    <property type="entry name" value="PEP_ENZYMES_2"/>
    <property type="match status" value="1"/>
</dbReference>
<dbReference type="PROSITE" id="PS00370">
    <property type="entry name" value="PEP_ENZYMES_PHOS_SITE"/>
    <property type="match status" value="1"/>
</dbReference>
<keyword id="KW-0963">Cytoplasm</keyword>
<keyword id="KW-0418">Kinase</keyword>
<keyword id="KW-0460">Magnesium</keyword>
<keyword id="KW-0479">Metal-binding</keyword>
<keyword id="KW-0598">Phosphotransferase system</keyword>
<keyword id="KW-1185">Reference proteome</keyword>
<keyword id="KW-0762">Sugar transport</keyword>
<keyword id="KW-0808">Transferase</keyword>
<keyword id="KW-0813">Transport</keyword>
<proteinExistence type="inferred from homology"/>
<organism>
    <name type="scientific">Mycoplasma genitalium (strain ATCC 33530 / DSM 19775 / NCTC 10195 / G37)</name>
    <name type="common">Mycoplasmoides genitalium</name>
    <dbReference type="NCBI Taxonomy" id="243273"/>
    <lineage>
        <taxon>Bacteria</taxon>
        <taxon>Bacillati</taxon>
        <taxon>Mycoplasmatota</taxon>
        <taxon>Mycoplasmoidales</taxon>
        <taxon>Mycoplasmoidaceae</taxon>
        <taxon>Mycoplasmoides</taxon>
    </lineage>
</organism>
<evidence type="ECO:0000250" key="1">
    <source>
        <dbReference type="UniProtKB" id="P08839"/>
    </source>
</evidence>
<evidence type="ECO:0000250" key="2">
    <source>
        <dbReference type="UniProtKB" id="P23533"/>
    </source>
</evidence>
<evidence type="ECO:0000305" key="3"/>
<name>PT1_MYCGE</name>
<protein>
    <recommendedName>
        <fullName evidence="1">Phosphoenolpyruvate-protein phosphotransferase</fullName>
        <ecNumber evidence="1">2.7.3.9</ecNumber>
    </recommendedName>
    <alternativeName>
        <fullName evidence="1">Phosphotransferase system, enzyme I</fullName>
    </alternativeName>
</protein>
<sequence length="572" mass="64202">MKKIIGIGVSDGIAVAKAFIIQTPQFDVKKYTNVKMTPTQAKKLLSSAFQKAKKDLEEIKTITVKNINQEAGMIFDAHIQILNDPTITEQLEQQLNKNIHPVIAVDNVFQQTALMFSEMDDKYFKERASDILDLHQRLLSYLTGVKLNDLIRIKSDVIIVANDLTPSQTATLNKKYVKGFLTESGGKTSHAAIMARSMEIPAIVGLKNITSKVEDGKTVGINGRKGIVGFDFSSKDITQWKQEKELESNFQNELKQYTNKLVKTLDGYEVIVASNIGNVKDMDLAVEYNTNGIGLFRTEFLYMSSQDWPDESVQFEAYKTVLQKAKNDLVIIRTLDIGGDKKLNYFQFPHEDNPFLGYRAIRLTLDKQAVFKTQLRALLRASDYGNLGIMFPMVATLDELVQVKQLLTKVQQEFNETKKFKLGIMIEIPSAALAADCLGKHVDFFSIGSNDLIQYSFAADRMNKNVSYLYQPLNPALLRLIKLVVEGGKLNNVWTGMCGEMASDQYAIPLLLGLGLTELSMSASSMFKARMVIAKITINECKSLVEKALKLTSDSAVRKLVENFFKKKNIFI</sequence>
<accession>P47668</accession>
<feature type="chain" id="PRO_0000147076" description="Phosphoenolpyruvate-protein phosphotransferase">
    <location>
        <begin position="1"/>
        <end position="572"/>
    </location>
</feature>
<feature type="active site" description="Tele-phosphohistidine intermediate" evidence="1">
    <location>
        <position position="190"/>
    </location>
</feature>
<feature type="active site" description="Proton donor" evidence="1">
    <location>
        <position position="498"/>
    </location>
</feature>
<feature type="binding site" evidence="2">
    <location>
        <position position="297"/>
    </location>
    <ligand>
        <name>phosphoenolpyruvate</name>
        <dbReference type="ChEBI" id="CHEBI:58702"/>
    </ligand>
</feature>
<feature type="binding site" evidence="1">
    <location>
        <position position="333"/>
    </location>
    <ligand>
        <name>phosphoenolpyruvate</name>
        <dbReference type="ChEBI" id="CHEBI:58702"/>
    </ligand>
</feature>
<feature type="binding site" evidence="1">
    <location>
        <position position="427"/>
    </location>
    <ligand>
        <name>Mg(2+)</name>
        <dbReference type="ChEBI" id="CHEBI:18420"/>
    </ligand>
</feature>
<feature type="binding site" evidence="1">
    <location>
        <begin position="450"/>
        <end position="451"/>
    </location>
    <ligand>
        <name>phosphoenolpyruvate</name>
        <dbReference type="ChEBI" id="CHEBI:58702"/>
    </ligand>
</feature>
<feature type="binding site" evidence="1">
    <location>
        <position position="451"/>
    </location>
    <ligand>
        <name>Mg(2+)</name>
        <dbReference type="ChEBI" id="CHEBI:18420"/>
    </ligand>
</feature>
<feature type="binding site" evidence="2">
    <location>
        <position position="461"/>
    </location>
    <ligand>
        <name>phosphoenolpyruvate</name>
        <dbReference type="ChEBI" id="CHEBI:58702"/>
    </ligand>
</feature>
<reference key="1">
    <citation type="journal article" date="1995" name="Science">
        <title>The minimal gene complement of Mycoplasma genitalium.</title>
        <authorList>
            <person name="Fraser C.M."/>
            <person name="Gocayne J.D."/>
            <person name="White O."/>
            <person name="Adams M.D."/>
            <person name="Clayton R.A."/>
            <person name="Fleischmann R.D."/>
            <person name="Bult C.J."/>
            <person name="Kerlavage A.R."/>
            <person name="Sutton G.G."/>
            <person name="Kelley J.M."/>
            <person name="Fritchman J.L."/>
            <person name="Weidman J.F."/>
            <person name="Small K.V."/>
            <person name="Sandusky M."/>
            <person name="Fuhrmann J.L."/>
            <person name="Nguyen D.T."/>
            <person name="Utterback T.R."/>
            <person name="Saudek D.M."/>
            <person name="Phillips C.A."/>
            <person name="Merrick J.M."/>
            <person name="Tomb J.-F."/>
            <person name="Dougherty B.A."/>
            <person name="Bott K.F."/>
            <person name="Hu P.-C."/>
            <person name="Lucier T.S."/>
            <person name="Peterson S.N."/>
            <person name="Smith H.O."/>
            <person name="Hutchison C.A. III"/>
            <person name="Venter J.C."/>
        </authorList>
    </citation>
    <scope>NUCLEOTIDE SEQUENCE [LARGE SCALE GENOMIC DNA]</scope>
    <source>
        <strain>ATCC 33530 / DSM 19775 / NCTC 10195 / G37</strain>
    </source>
</reference>
<reference key="2">
    <citation type="journal article" date="1996" name="Microb. Comp. Genomics">
        <title>Novel phosphotransferase system genes revealed by bacterial genome analysis: the complete complement of pts genes in Mycoplasma genitalium.</title>
        <authorList>
            <person name="Reizer J."/>
            <person name="Paulsen I.T."/>
            <person name="Reizer A."/>
            <person name="Titgemeyer F."/>
            <person name="Saier M.H. Jr."/>
        </authorList>
    </citation>
    <scope>DISCUSSION OF SEQUENCE</scope>
</reference>
<gene>
    <name type="primary">ptsI</name>
    <name type="ordered locus">MG429</name>
</gene>